<keyword id="KW-0511">Multifunctional enzyme</keyword>
<keyword id="KW-0596">Phosphopantetheine</keyword>
<keyword id="KW-0597">Phosphoprotein</keyword>
<keyword id="KW-0808">Transferase</keyword>
<organism>
    <name type="scientific">Cladosporium cladosporioides</name>
    <dbReference type="NCBI Taxonomy" id="29917"/>
    <lineage>
        <taxon>Eukaryota</taxon>
        <taxon>Fungi</taxon>
        <taxon>Dikarya</taxon>
        <taxon>Ascomycota</taxon>
        <taxon>Pezizomycotina</taxon>
        <taxon>Dothideomycetes</taxon>
        <taxon>Dothideomycetidae</taxon>
        <taxon>Cladosporiales</taxon>
        <taxon>Cladosporiaceae</taxon>
        <taxon>Cladosporium</taxon>
    </lineage>
</organism>
<reference key="1">
    <citation type="journal article" date="2016" name="Angew. Chem. Int. Ed.">
        <title>Production of new cladosporin analogues by reconstitution of the polyketide synthases responsible for the biosynthesis of this antimalarial agent.</title>
        <authorList>
            <person name="Cochrane R.V."/>
            <person name="Sanichar R."/>
            <person name="Lambkin G.R."/>
            <person name="Reiz B."/>
            <person name="Xu W."/>
            <person name="Tang Y."/>
            <person name="Vederas J.C."/>
        </authorList>
    </citation>
    <scope>NUCLEOTIDE SEQUENCE [MRNA]</scope>
    <scope>FUNCTION</scope>
    <scope>CATALYTIC ACTIVITY</scope>
</reference>
<reference key="2">
    <citation type="journal article" date="1971" name="J. Antibiot.">
        <title>Cladosporin, a new antifungal metabolite from Cladosporium cladosporioides.</title>
        <authorList>
            <person name="Scott P.M."/>
            <person name="Van Walbeek W."/>
            <person name="MacLean W.M."/>
        </authorList>
    </citation>
    <scope>BIOTECHNOLOGY</scope>
</reference>
<reference key="3">
    <citation type="journal article" date="2012" name="Cell Host Microbe">
        <title>Selective and specific inhibition of the plasmodium falciparum lysyl-tRNA synthetase by the fungal secondary metabolite cladosporin.</title>
        <authorList>
            <person name="Hoepfner D."/>
            <person name="McNamara C.W."/>
            <person name="Lim C.S."/>
            <person name="Studer C."/>
            <person name="Riedl R."/>
            <person name="Aust T."/>
            <person name="McCormack S.L."/>
            <person name="Plouffe D.M."/>
            <person name="Meister S."/>
            <person name="Schuierer S."/>
            <person name="Plikat U."/>
            <person name="Hartmann N."/>
            <person name="Staedtler F."/>
            <person name="Cotesta S."/>
            <person name="Schmitt E.K."/>
            <person name="Petersen F."/>
            <person name="Supek F."/>
            <person name="Glynne R.J."/>
            <person name="Tallarico J.A."/>
            <person name="Porter J.A."/>
            <person name="Fishman M.C."/>
            <person name="Bodenreider C."/>
            <person name="Diagana T.T."/>
            <person name="Movva N.R."/>
            <person name="Winzeler E.A."/>
        </authorList>
    </citation>
    <scope>BIOTECHNOLOGY</scope>
</reference>
<reference key="4">
    <citation type="journal article" date="2014" name="J. Struct. Funct. Genomics">
        <title>Structural basis of malaria parasite lysyl-tRNA synthetase inhibition by cladosporin.</title>
        <authorList>
            <person name="Khan S."/>
            <person name="Sharma A."/>
            <person name="Belrhali H."/>
            <person name="Yogavel M."/>
            <person name="Sharma A."/>
        </authorList>
    </citation>
    <scope>BIOTECHNOLOGY</scope>
</reference>
<reference key="5">
    <citation type="journal article" date="2015" name="Chem. Biol.">
        <title>Structural Basis for Specific Inhibition of tRNA Synthetase by an ATP Competitive Inhibitor.</title>
        <authorList>
            <person name="Fang P."/>
            <person name="Han H."/>
            <person name="Wang J."/>
            <person name="Chen K."/>
            <person name="Chen X."/>
            <person name="Guo M."/>
        </authorList>
    </citation>
    <scope>BIOTECHNOLOGY</scope>
</reference>
<dbReference type="EC" id="2.3.1.-" evidence="12"/>
<dbReference type="EMBL" id="KT037692">
    <property type="protein sequence ID" value="AMB51800.1"/>
    <property type="molecule type" value="mRNA"/>
</dbReference>
<dbReference type="SMR" id="A0A125R003"/>
<dbReference type="ESTHER" id="clacd-cla3">
    <property type="family name" value="Thioesterase"/>
</dbReference>
<dbReference type="GO" id="GO:0004315">
    <property type="term" value="F:3-oxoacyl-[acyl-carrier-protein] synthase activity"/>
    <property type="evidence" value="ECO:0007669"/>
    <property type="project" value="InterPro"/>
</dbReference>
<dbReference type="GO" id="GO:0004312">
    <property type="term" value="F:fatty acid synthase activity"/>
    <property type="evidence" value="ECO:0007669"/>
    <property type="project" value="TreeGrafter"/>
</dbReference>
<dbReference type="GO" id="GO:0031177">
    <property type="term" value="F:phosphopantetheine binding"/>
    <property type="evidence" value="ECO:0007669"/>
    <property type="project" value="InterPro"/>
</dbReference>
<dbReference type="GO" id="GO:0006633">
    <property type="term" value="P:fatty acid biosynthetic process"/>
    <property type="evidence" value="ECO:0007669"/>
    <property type="project" value="InterPro"/>
</dbReference>
<dbReference type="GO" id="GO:0044550">
    <property type="term" value="P:secondary metabolite biosynthetic process"/>
    <property type="evidence" value="ECO:0007669"/>
    <property type="project" value="TreeGrafter"/>
</dbReference>
<dbReference type="CDD" id="cd00833">
    <property type="entry name" value="PKS"/>
    <property type="match status" value="1"/>
</dbReference>
<dbReference type="Gene3D" id="3.30.70.3290">
    <property type="match status" value="1"/>
</dbReference>
<dbReference type="Gene3D" id="3.40.47.10">
    <property type="match status" value="1"/>
</dbReference>
<dbReference type="Gene3D" id="1.10.1200.10">
    <property type="entry name" value="ACP-like"/>
    <property type="match status" value="1"/>
</dbReference>
<dbReference type="Gene3D" id="3.40.50.1820">
    <property type="entry name" value="alpha/beta hydrolase"/>
    <property type="match status" value="1"/>
</dbReference>
<dbReference type="Gene3D" id="3.30.70.250">
    <property type="entry name" value="Malonyl-CoA ACP transacylase, ACP-binding"/>
    <property type="match status" value="1"/>
</dbReference>
<dbReference type="Gene3D" id="3.40.366.10">
    <property type="entry name" value="Malonyl-Coenzyme A Acyl Carrier Protein, domain 2"/>
    <property type="match status" value="1"/>
</dbReference>
<dbReference type="Gene3D" id="3.10.129.110">
    <property type="entry name" value="Polyketide synthase dehydratase"/>
    <property type="match status" value="1"/>
</dbReference>
<dbReference type="InterPro" id="IPR029058">
    <property type="entry name" value="AB_hydrolase_fold"/>
</dbReference>
<dbReference type="InterPro" id="IPR001227">
    <property type="entry name" value="Ac_transferase_dom_sf"/>
</dbReference>
<dbReference type="InterPro" id="IPR036736">
    <property type="entry name" value="ACP-like_sf"/>
</dbReference>
<dbReference type="InterPro" id="IPR014043">
    <property type="entry name" value="Acyl_transferase_dom"/>
</dbReference>
<dbReference type="InterPro" id="IPR016035">
    <property type="entry name" value="Acyl_Trfase/lysoPLipase"/>
</dbReference>
<dbReference type="InterPro" id="IPR018201">
    <property type="entry name" value="Ketoacyl_synth_AS"/>
</dbReference>
<dbReference type="InterPro" id="IPR014031">
    <property type="entry name" value="Ketoacyl_synth_C"/>
</dbReference>
<dbReference type="InterPro" id="IPR014030">
    <property type="entry name" value="Ketoacyl_synth_N"/>
</dbReference>
<dbReference type="InterPro" id="IPR016036">
    <property type="entry name" value="Malonyl_transacylase_ACP-bd"/>
</dbReference>
<dbReference type="InterPro" id="IPR020841">
    <property type="entry name" value="PKS_Beta-ketoAc_synthase_dom"/>
</dbReference>
<dbReference type="InterPro" id="IPR042104">
    <property type="entry name" value="PKS_dehydratase_sf"/>
</dbReference>
<dbReference type="InterPro" id="IPR049900">
    <property type="entry name" value="PKS_mFAS_DH"/>
</dbReference>
<dbReference type="InterPro" id="IPR050091">
    <property type="entry name" value="PKS_NRPS_Biosynth_Enz"/>
</dbReference>
<dbReference type="InterPro" id="IPR020806">
    <property type="entry name" value="PKS_PP-bd"/>
</dbReference>
<dbReference type="InterPro" id="IPR009081">
    <property type="entry name" value="PP-bd_ACP"/>
</dbReference>
<dbReference type="InterPro" id="IPR006162">
    <property type="entry name" value="Ppantetheine_attach_site"/>
</dbReference>
<dbReference type="InterPro" id="IPR030918">
    <property type="entry name" value="PT_fungal_PKS"/>
</dbReference>
<dbReference type="InterPro" id="IPR032088">
    <property type="entry name" value="SAT"/>
</dbReference>
<dbReference type="InterPro" id="IPR001031">
    <property type="entry name" value="Thioesterase"/>
</dbReference>
<dbReference type="InterPro" id="IPR016039">
    <property type="entry name" value="Thiolase-like"/>
</dbReference>
<dbReference type="NCBIfam" id="TIGR04532">
    <property type="entry name" value="PT_fungal_PKS"/>
    <property type="match status" value="1"/>
</dbReference>
<dbReference type="PANTHER" id="PTHR43775:SF45">
    <property type="entry name" value="CONIDIAL PIGMENT POLYKETIDE SYNTHASE ALB1"/>
    <property type="match status" value="1"/>
</dbReference>
<dbReference type="PANTHER" id="PTHR43775">
    <property type="entry name" value="FATTY ACID SYNTHASE"/>
    <property type="match status" value="1"/>
</dbReference>
<dbReference type="Pfam" id="PF00698">
    <property type="entry name" value="Acyl_transf_1"/>
    <property type="match status" value="1"/>
</dbReference>
<dbReference type="Pfam" id="PF22621">
    <property type="entry name" value="CurL-like_PKS_C"/>
    <property type="match status" value="1"/>
</dbReference>
<dbReference type="Pfam" id="PF00109">
    <property type="entry name" value="ketoacyl-synt"/>
    <property type="match status" value="1"/>
</dbReference>
<dbReference type="Pfam" id="PF02801">
    <property type="entry name" value="Ketoacyl-synt_C"/>
    <property type="match status" value="1"/>
</dbReference>
<dbReference type="Pfam" id="PF00550">
    <property type="entry name" value="PP-binding"/>
    <property type="match status" value="1"/>
</dbReference>
<dbReference type="Pfam" id="PF16073">
    <property type="entry name" value="SAT"/>
    <property type="match status" value="1"/>
</dbReference>
<dbReference type="Pfam" id="PF00975">
    <property type="entry name" value="Thioesterase"/>
    <property type="match status" value="1"/>
</dbReference>
<dbReference type="SMART" id="SM00827">
    <property type="entry name" value="PKS_AT"/>
    <property type="match status" value="1"/>
</dbReference>
<dbReference type="SMART" id="SM00825">
    <property type="entry name" value="PKS_KS"/>
    <property type="match status" value="1"/>
</dbReference>
<dbReference type="SMART" id="SM00823">
    <property type="entry name" value="PKS_PP"/>
    <property type="match status" value="1"/>
</dbReference>
<dbReference type="SUPFAM" id="SSF47336">
    <property type="entry name" value="ACP-like"/>
    <property type="match status" value="1"/>
</dbReference>
<dbReference type="SUPFAM" id="SSF53474">
    <property type="entry name" value="alpha/beta-Hydrolases"/>
    <property type="match status" value="1"/>
</dbReference>
<dbReference type="SUPFAM" id="SSF52151">
    <property type="entry name" value="FabD/lysophospholipase-like"/>
    <property type="match status" value="1"/>
</dbReference>
<dbReference type="SUPFAM" id="SSF55048">
    <property type="entry name" value="Probable ACP-binding domain of malonyl-CoA ACP transacylase"/>
    <property type="match status" value="1"/>
</dbReference>
<dbReference type="SUPFAM" id="SSF53901">
    <property type="entry name" value="Thiolase-like"/>
    <property type="match status" value="1"/>
</dbReference>
<dbReference type="PROSITE" id="PS50075">
    <property type="entry name" value="CARRIER"/>
    <property type="match status" value="1"/>
</dbReference>
<dbReference type="PROSITE" id="PS00606">
    <property type="entry name" value="KS3_1"/>
    <property type="match status" value="1"/>
</dbReference>
<dbReference type="PROSITE" id="PS52004">
    <property type="entry name" value="KS3_2"/>
    <property type="match status" value="1"/>
</dbReference>
<dbReference type="PROSITE" id="PS00012">
    <property type="entry name" value="PHOSPHOPANTETHEINE"/>
    <property type="match status" value="1"/>
</dbReference>
<dbReference type="PROSITE" id="PS52019">
    <property type="entry name" value="PKS_MFAS_DH"/>
    <property type="match status" value="1"/>
</dbReference>
<evidence type="ECO:0000250" key="1">
    <source>
        <dbReference type="UniProtKB" id="Q5ATJ7"/>
    </source>
</evidence>
<evidence type="ECO:0000250" key="2">
    <source>
        <dbReference type="UniProtKB" id="Q5B0D0"/>
    </source>
</evidence>
<evidence type="ECO:0000255" key="3"/>
<evidence type="ECO:0000255" key="4">
    <source>
        <dbReference type="PROSITE-ProRule" id="PRU00258"/>
    </source>
</evidence>
<evidence type="ECO:0000255" key="5">
    <source>
        <dbReference type="PROSITE-ProRule" id="PRU01348"/>
    </source>
</evidence>
<evidence type="ECO:0000255" key="6">
    <source>
        <dbReference type="PROSITE-ProRule" id="PRU01363"/>
    </source>
</evidence>
<evidence type="ECO:0000255" key="7">
    <source>
        <dbReference type="PROSITE-ProRule" id="PRU10022"/>
    </source>
</evidence>
<evidence type="ECO:0000256" key="8">
    <source>
        <dbReference type="SAM" id="MobiDB-lite"/>
    </source>
</evidence>
<evidence type="ECO:0000269" key="9">
    <source>
    </source>
</evidence>
<evidence type="ECO:0000269" key="10">
    <source>
    </source>
</evidence>
<evidence type="ECO:0000269" key="11">
    <source>
    </source>
</evidence>
<evidence type="ECO:0000269" key="12">
    <source>
    </source>
</evidence>
<evidence type="ECO:0000269" key="13">
    <source>
    </source>
</evidence>
<evidence type="ECO:0000303" key="14">
    <source>
    </source>
</evidence>
<sequence>MHNGSESVLLFGDYTEPWIESIDSLCRQAVSEAWLQSFLDDTVTIIKEQKRSIERILQDSLGEFTDLKDLADRHRGRTDEISYVQGLMLFTVRAAYLLQWVKRDPSLLTASHAIGFSGGLANASVLAVAQDFDTLYTACLEGLRIFSRSCRLAIVRSRAIEEGSGSWGWLVVGISSNDLRHALDHFQNSLGIPNSKRSKVGLTGDRWNTVIGPPSTLELVFKQCPAIKSLPKEKLNIHALQHALDLSESDLDYIIGDSALAQSHVNPEFSLWGMAQPKEPWGSWGELLKVVIVKMLSEPLDIVGVVDEFSGRLGSVPQVNICNMAMEGPSSHAAYLLSTMKLSGKTVNFENGFGSEKAQSASSGRIAIVGMSGRGPGCEDLEEFWNVISNAQDQHQEIPKDRFNLEDYLKQGHVTHCQSESMAKHGCFITKPGEFDARFFHISPREALLMDPGHRMFLMSAYEALETAGYSNGHTKATDPQKISIFFAQCNDDWRIASHDVKGCDSYTLPGTARAFGPGRLAFHLGWEGPAYSMDSACASSVSSVHFACMSLKNKDTDMAVVGAANVIGYPHTFISLSQSGVLSRTGNCKPFRDDADGYCRADFSGAIVLKRLEDAIAANDNILGVLAGTGRNQAGNATSITTSDTATQTRLFHKVLRSANVSPEDISYVEMHGTGTPIGDPAEMGAIANVFGNRKGNTPLPLGAVKGNVGHSESSAGMASLLKCLMMLQKDAIPPQAGMPHALNPKFPSLSDINVVIPSKLGDFKKTLNMPRRILLNNFDAAGGNGCLLLEEYVPPTSKELNIDEQDPRSTHVVVLSAKTQASHHANKRNLLDWLKTNRSTRIQDIAYTSTARRVHWPLRYAIAASSTQELTTKLESSIARENSESTNGRKSPIVFTFTGQGSQYAGMGAELYSTCFAFRDTIKLCARICDDHQFPDFIDIITDKDIDISTKSPLQIQLALLALEIGLAAFWKSIGVLPDMVVGHSLGEYAALYVAGVLSLGDVFYVVGRRAMLLLDRCEIGSCSMLALNASVATVQAHLDTQPHLSCAVACINGPKATVVSGPLGEIADLQTLFHGNKIRSKLLPVPFAFHSLQMEPILDEFTILAGIATFMQPKIPVASTLLATVVDKEGIFGTQYLAEQTRQRVDFVGALNAVKSKMDDPIWLEVGPSPVCSGLVQATISPSTTKIMSTLDATGSDWSSIAHCLSGLYQNGVDIDWLGLHAPYEGGLTLQALPSYQWDLKDYWMPYVEPSGVDQTVIANTASGRGTMSSSISTCAQYVITETKTPKPQVNLGAPTADAGFKAFIDGHRLRGVPVCAGAVFIEAAETAARYLLKYLGRNDADTAVLSLQDMALIRPITQKSVQANAELQTTATLDSGSKDTVRITFGESLAAGSSQHLGGCLLSICEAGLESQWEKSSFFIRSRMNDIIANVKGGQGHRIQRDIYYALFADTVEYDNPFRGVKEAYVSQDFEEAAAEVILKADPTGTQFTTSPYWTDSLSQLCGFVVNGNPSRPKDITYMMASLGSYIQMGQIVPGKSYFTYSRISDRAQDLVYCDTFVFDNDRLVAQSTNCVFHRVQNVILERLLGKPASSSVPAQASDPLRSKRSPQEARSLPGEAKTEKPGSTIATTSPVLESGKSEQGMFQALIAAIVKTTGGELSELNDDTELADIGVDSIMAIEIVAHVKDATNQDLPLSFVLEYPTIGNLRCAFDEDVSSEFTDSEVTSGTPNSSESVTSEEELPGPEEHAFKEPKDDSPLARRDMDNSNDRSLDGGVLDDGSPQPRVRISLLQGRPVRGKPKFFLIADGSGSIATYIHLPPAKVKMPIYGVDSPFLHCPSRFTPEAGIPAAAKWIVEALMKAQPEGPFFLGGFSGGAMLSYEVARQLAAFDRKVDSMVLIDMCCPRPAVSSDLKESLWNDDIESFEEIASHVGSNVASNMQQHLRAIFKAVSVYHPPSMTAKERPDRTIIIWAKKGMITRCHDVPEIMERLSARGLTRTIPEGFMEDPSFGAIRWSFVSKGANDLGPNGWQKYIGHEPLCLSVDLDHLEMMEPGQVHIFRGAFEEAFRLIEA</sequence>
<comment type="function">
    <text evidence="12">Highly reducing polyketide synthase; part of the gene cluster that mediates the biosynthesis of cladosporin, a tricyclic octaketide that acts as an antimalarial agent though inhibition of the Plasmodium falciparum lysyl-tRNA synthetase (PubMed:26783060). The highly reducing polyketide synthase cla2 is responsible for biosynthesis up to the pentaketide stage, including of the tetrahydropyran (THP) ring, whereas the three subsequent ketide extensions with no reduction are catalyzed by the non-reducing polyketide synthase cla3 (PubMed:26783060).</text>
</comment>
<comment type="pathway">
    <text evidence="12">Secondary metabolite biosynthesis.</text>
</comment>
<comment type="domain">
    <text evidence="2">Multidomain protein; including a starter unit:ACP transacylase (SAT) that selects the starter unit; a ketosynthase (KS) that catalyzes repeated decarboxylative condensation to elongate the polyketide backbone; a malonyl-CoA:ACP transacylase (MAT) that selects and transfers the extender unit malonyl-CoA; a product template (PT) domain that controls the immediate cyclization regioselectivity of the reactive polyketide backbone; and an acyl-carrier protein (ACP) that serves as the tether of the growing and completed polyketide via its phosphopantetheinyl arm (By similarity).</text>
</comment>
<comment type="domain">
    <text evidence="1">The release of the polyketide chain from the non-reducing polyketide synthase is mediated by the thioesterase (TE) domain localized at the C-ter of the protein (By similarity).</text>
</comment>
<comment type="biotechnology">
    <text evidence="9 10 11 13">Cladosporin has been intensely studied for its antimalarial activity though inhibition of the Plasmodium falciparum lysyl-tRNA synthetase (PubMed:22704625, PubMed:24935905, PubMed:26074468). Cladosporin also has antifungal activity against dermatophytes, as well as Penicillium and Aspergillus species (PubMed:5169000).</text>
</comment>
<proteinExistence type="evidence at protein level"/>
<name>CLA3_CLACD</name>
<feature type="chain" id="PRO_0000437052" description="Non-reducing polyketide synthase cla3">
    <location>
        <begin position="1"/>
        <end position="2073"/>
    </location>
</feature>
<feature type="domain" description="Ketosynthase family 3 (KS3)" evidence="5">
    <location>
        <begin position="363"/>
        <end position="793"/>
    </location>
</feature>
<feature type="domain" description="PKS/mFAS DH" evidence="6">
    <location>
        <begin position="1279"/>
        <end position="1586"/>
    </location>
</feature>
<feature type="domain" description="Carrier" evidence="4">
    <location>
        <begin position="1641"/>
        <end position="1718"/>
    </location>
</feature>
<feature type="region of interest" description="N-terminal acylcarrier protein transacylase domain (SAT)" evidence="3">
    <location>
        <begin position="9"/>
        <end position="242"/>
    </location>
</feature>
<feature type="region of interest" description="Malonyl-CoA:ACP transacylase (MAT) domain" evidence="3">
    <location>
        <begin position="898"/>
        <end position="1198"/>
    </location>
</feature>
<feature type="region of interest" description="Product template (PT) domain" evidence="3">
    <location>
        <begin position="1276"/>
        <end position="1590"/>
    </location>
</feature>
<feature type="region of interest" description="N-terminal hotdog fold" evidence="6">
    <location>
        <begin position="1279"/>
        <end position="1420"/>
    </location>
</feature>
<feature type="region of interest" description="C-terminal hotdog fold" evidence="6">
    <location>
        <begin position="1439"/>
        <end position="1586"/>
    </location>
</feature>
<feature type="region of interest" description="Disordered" evidence="8">
    <location>
        <begin position="1594"/>
        <end position="1637"/>
    </location>
</feature>
<feature type="region of interest" description="Disordered" evidence="8">
    <location>
        <begin position="1721"/>
        <end position="1786"/>
    </location>
</feature>
<feature type="region of interest" description="Thioesterase (TE) domain" evidence="3">
    <location>
        <begin position="1805"/>
        <end position="1950"/>
    </location>
</feature>
<feature type="compositionally biased region" description="Polar residues" evidence="8">
    <location>
        <begin position="1721"/>
        <end position="1738"/>
    </location>
</feature>
<feature type="compositionally biased region" description="Basic and acidic residues" evidence="8">
    <location>
        <begin position="1747"/>
        <end position="1774"/>
    </location>
</feature>
<feature type="active site" description="For beta-ketoacyl synthase activity" evidence="5">
    <location>
        <position position="538"/>
    </location>
</feature>
<feature type="active site" description="For beta-ketoacyl synthase activity" evidence="5">
    <location>
        <position position="673"/>
    </location>
</feature>
<feature type="active site" description="For beta-ketoacyl synthase activity" evidence="5">
    <location>
        <position position="712"/>
    </location>
</feature>
<feature type="active site" description="For acyl/malonyl transferase activity" evidence="7">
    <location>
        <position position="987"/>
    </location>
</feature>
<feature type="active site" description="Proton acceptor; for dehydratase activity" evidence="6">
    <location>
        <position position="1311"/>
    </location>
</feature>
<feature type="active site" description="Proton donor; for dehydratase activity" evidence="6">
    <location>
        <position position="1500"/>
    </location>
</feature>
<feature type="active site" description="For thioesterase activity" evidence="1">
    <location>
        <position position="2058"/>
    </location>
</feature>
<feature type="modified residue" description="O-(pantetheine 4'-phosphoryl)serine" evidence="4">
    <location>
        <position position="1678"/>
    </location>
</feature>
<accession>A0A125R003</accession>
<gene>
    <name evidence="14" type="primary">cla3</name>
</gene>
<protein>
    <recommendedName>
        <fullName evidence="14">Non-reducing polyketide synthase cla3</fullName>
        <ecNumber evidence="12">2.3.1.-</ecNumber>
    </recommendedName>
    <alternativeName>
        <fullName evidence="14">Cladosporin biosynthesis cluster protein 3</fullName>
    </alternativeName>
</protein>